<sequence length="498" mass="56096">MASQGTKRSYEQMETDGERQNATEIRASVGKMIDGIGRFYIQMCTELKLSDYEGRLIQNSLTIERMVLSAFDERRNRYLEEHPSAGKDPKKTGGPIYKRVDGKWMRELVLYDKEEIRRIWRQANNGDDATAGLTHMMIWHSNLNDTTYQRTRALVRTGMDPRMCSLMQGSTLPRRSGAAGAAVKGVGTMVMELIRMIKRGINDRNFWRGENGRKTRSAYERMCNILKGKFQTAAQRAMMDQVRESRNPGNAEIEDLIFSARSALILRGSVAHKSCLPACVYGPAVASGYNFEKEGYSLVGIDPFKLLQNSQVYSLIRPNENPAHKSQLVWMACHSAAFEDLRLLSFIRGTKVSPRGKLSTRGVQIASNENMDTMESSTLELRSRYWAIRTRSGGNTNQQRASAGQISVQPAFSVQRNLPFDKSTIMAAFTGNTEGRTSDMRAEIIRMMEGAKPEEVSFRGRGVFELSDEKATNPVVPSFDMSNEGSYFFGDNAEEYDN</sequence>
<protein>
    <recommendedName>
        <fullName evidence="1">Nucleoprotein</fullName>
    </recommendedName>
    <alternativeName>
        <fullName evidence="1">Nucleocapsid protein</fullName>
        <shortName evidence="1">Protein N</shortName>
    </alternativeName>
</protein>
<gene>
    <name evidence="1" type="primary">NP</name>
</gene>
<organism>
    <name type="scientific">Influenza A virus (strain A/Beijing/39/1975 H3N2)</name>
    <dbReference type="NCBI Taxonomy" id="383596"/>
    <lineage>
        <taxon>Viruses</taxon>
        <taxon>Riboviria</taxon>
        <taxon>Orthornavirae</taxon>
        <taxon>Negarnaviricota</taxon>
        <taxon>Polyploviricotina</taxon>
        <taxon>Insthoviricetes</taxon>
        <taxon>Articulavirales</taxon>
        <taxon>Orthomyxoviridae</taxon>
        <taxon>Alphainfluenzavirus</taxon>
        <taxon>Alphainfluenzavirus influenzae</taxon>
        <taxon>Influenza A virus</taxon>
    </lineage>
</organism>
<comment type="function">
    <text evidence="1">Encapsidates the negative strand viral RNA, protecting it from nucleases. The encapsidated genomic RNA is termed the ribonucleoprotein (RNP) and serves as template for transcription and replication. The RNP needs to be localized in the host nucleus to start an infectious cycle, but is too large to diffuse through the nuclear pore complex. NP comprises at least 2 nuclear localization signals that are responsible for the active RNP import into the nucleus through cellular importin alpha/beta pathway. Later in the infection, nclear export of RNPs are mediated through viral proteins NEP interacting with M1 which binds nucleoproteins. It is possible that nucleoprotein binds directly host exportin-1/XPO1 and plays an active role in RNPs nuclear export. M1 interaction with RNP seems to hide nucleoprotein's nuclear localization signals. Soon after a virion infects a new cell, M1 dissociates from the RNP under acidification of the virion driven by M2 protein. Dissociation of M1 from RNP unmasks nucleoprotein's nuclear localization signals, targeting the RNP to the nucleus.</text>
</comment>
<comment type="subunit">
    <text evidence="1">Homomultimerizes to form the nucleocapsid. May bind host exportin-1/XPO1. Binds to viral genomic RNA. Protein-RNA contacts are mediated by a combination of electrostatic interactions between positively charged residues and the phosphate backbone and planar interactions between aromatic side chains and bases.</text>
</comment>
<comment type="subcellular location">
    <subcellularLocation>
        <location evidence="1">Virion</location>
    </subcellularLocation>
    <subcellularLocation>
        <location evidence="1">Host nucleus</location>
    </subcellularLocation>
</comment>
<comment type="PTM">
    <text evidence="1">Late in virus-infected cells, may be cleaved from a 56-kDa protein to a 53-kDa protein by a cellular caspase. This cleavage might be a marker for the onset of apoptosis in infected cells or have a specific function in virus host interaction.</text>
</comment>
<comment type="similarity">
    <text evidence="1">Belongs to the influenza viruses nucleoprotein family.</text>
</comment>
<evidence type="ECO:0000255" key="1">
    <source>
        <dbReference type="HAMAP-Rule" id="MF_04070"/>
    </source>
</evidence>
<evidence type="ECO:0000256" key="2">
    <source>
        <dbReference type="SAM" id="MobiDB-lite"/>
    </source>
</evidence>
<organismHost>
    <name type="scientific">Aves</name>
    <dbReference type="NCBI Taxonomy" id="8782"/>
</organismHost>
<organismHost>
    <name type="scientific">Cetacea</name>
    <name type="common">whales</name>
    <dbReference type="NCBI Taxonomy" id="9721"/>
</organismHost>
<organismHost>
    <name type="scientific">Homo sapiens</name>
    <name type="common">Human</name>
    <dbReference type="NCBI Taxonomy" id="9606"/>
</organismHost>
<organismHost>
    <name type="scientific">Phocidae</name>
    <name type="common">true seals</name>
    <dbReference type="NCBI Taxonomy" id="9709"/>
</organismHost>
<organismHost>
    <name type="scientific">Sus scrofa</name>
    <name type="common">Pig</name>
    <dbReference type="NCBI Taxonomy" id="9823"/>
</organismHost>
<name>NCAP_I75A0</name>
<keyword id="KW-0167">Capsid protein</keyword>
<keyword id="KW-1139">Helical capsid protein</keyword>
<keyword id="KW-1048">Host nucleus</keyword>
<keyword id="KW-0945">Host-virus interaction</keyword>
<keyword id="KW-0687">Ribonucleoprotein</keyword>
<keyword id="KW-0694">RNA-binding</keyword>
<keyword id="KW-0543">Viral nucleoprotein</keyword>
<keyword id="KW-1163">Viral penetration into host nucleus</keyword>
<keyword id="KW-0946">Virion</keyword>
<keyword id="KW-1160">Virus entry into host cell</keyword>
<dbReference type="EMBL" id="L07358">
    <property type="protein sequence ID" value="AAA51485.1"/>
    <property type="molecule type" value="Genomic_RNA"/>
</dbReference>
<dbReference type="EMBL" id="CY006047">
    <property type="protein sequence ID" value="ABB46396.1"/>
    <property type="molecule type" value="Genomic_RNA"/>
</dbReference>
<dbReference type="SMR" id="Q08028"/>
<dbReference type="PRO" id="PR:Q08028"/>
<dbReference type="Proteomes" id="UP000000827">
    <property type="component" value="Genome"/>
</dbReference>
<dbReference type="GO" id="GO:0019029">
    <property type="term" value="C:helical viral capsid"/>
    <property type="evidence" value="ECO:0007669"/>
    <property type="project" value="UniProtKB-UniRule"/>
</dbReference>
<dbReference type="GO" id="GO:0043657">
    <property type="term" value="C:host cell"/>
    <property type="evidence" value="ECO:0007669"/>
    <property type="project" value="GOC"/>
</dbReference>
<dbReference type="GO" id="GO:0042025">
    <property type="term" value="C:host cell nucleus"/>
    <property type="evidence" value="ECO:0007669"/>
    <property type="project" value="UniProtKB-SubCell"/>
</dbReference>
<dbReference type="GO" id="GO:1990904">
    <property type="term" value="C:ribonucleoprotein complex"/>
    <property type="evidence" value="ECO:0007669"/>
    <property type="project" value="UniProtKB-KW"/>
</dbReference>
<dbReference type="GO" id="GO:0019013">
    <property type="term" value="C:viral nucleocapsid"/>
    <property type="evidence" value="ECO:0007669"/>
    <property type="project" value="UniProtKB-UniRule"/>
</dbReference>
<dbReference type="GO" id="GO:0003723">
    <property type="term" value="F:RNA binding"/>
    <property type="evidence" value="ECO:0007669"/>
    <property type="project" value="UniProtKB-UniRule"/>
</dbReference>
<dbReference type="GO" id="GO:0005198">
    <property type="term" value="F:structural molecule activity"/>
    <property type="evidence" value="ECO:0007669"/>
    <property type="project" value="UniProtKB-UniRule"/>
</dbReference>
<dbReference type="GO" id="GO:0046718">
    <property type="term" value="P:symbiont entry into host cell"/>
    <property type="evidence" value="ECO:0007669"/>
    <property type="project" value="UniProtKB-KW"/>
</dbReference>
<dbReference type="GO" id="GO:0075732">
    <property type="term" value="P:viral penetration into host nucleus"/>
    <property type="evidence" value="ECO:0007669"/>
    <property type="project" value="UniProtKB-UniRule"/>
</dbReference>
<dbReference type="HAMAP" id="MF_04070">
    <property type="entry name" value="INFV_NCAP"/>
    <property type="match status" value="1"/>
</dbReference>
<dbReference type="InterPro" id="IPR002141">
    <property type="entry name" value="Flu_NP"/>
</dbReference>
<dbReference type="Pfam" id="PF00506">
    <property type="entry name" value="Flu_NP"/>
    <property type="match status" value="1"/>
</dbReference>
<dbReference type="SUPFAM" id="SSF161003">
    <property type="entry name" value="flu NP-like"/>
    <property type="match status" value="1"/>
</dbReference>
<proteinExistence type="inferred from homology"/>
<feature type="chain" id="PRO_0000079023" description="Nucleoprotein">
    <location>
        <begin position="1"/>
        <end position="498"/>
    </location>
</feature>
<feature type="region of interest" description="Disordered" evidence="2">
    <location>
        <begin position="1"/>
        <end position="21"/>
    </location>
</feature>
<feature type="short sequence motif" description="Unconventional nuclear localization signal" evidence="1">
    <location>
        <begin position="1"/>
        <end position="18"/>
    </location>
</feature>
<feature type="short sequence motif" description="Bipartite nuclear localization signal" evidence="1">
    <location>
        <begin position="198"/>
        <end position="216"/>
    </location>
</feature>
<feature type="compositionally biased region" description="Basic and acidic residues" evidence="2">
    <location>
        <begin position="8"/>
        <end position="21"/>
    </location>
</feature>
<feature type="sequence conflict" description="In Ref. 1; AAA51485." ref="1">
    <original>A</original>
    <variation>R</variation>
    <location>
        <position position="131"/>
    </location>
</feature>
<reference key="1">
    <citation type="journal article" date="1993" name="J. Virol.">
        <title>Analysis of the evolution and variation of the human influenza A virus nucleoprotein gene from 1933 to 1990.</title>
        <authorList>
            <person name="Shu L.L."/>
            <person name="Bean W.J."/>
            <person name="Webster R.G."/>
        </authorList>
    </citation>
    <scope>NUCLEOTIDE SEQUENCE [GENOMIC RNA]</scope>
</reference>
<reference key="2">
    <citation type="submission" date="2005-11" db="EMBL/GenBank/DDBJ databases">
        <title>The NIAID influenza genome sequencing project.</title>
        <authorList>
            <person name="Ghedin E."/>
            <person name="Spiro D."/>
            <person name="Miller N."/>
            <person name="Zaborsky J."/>
            <person name="Feldblyum T."/>
            <person name="Subbu V."/>
            <person name="Shumway M."/>
            <person name="Sparenborg J."/>
            <person name="Groveman L."/>
            <person name="Halpin R."/>
            <person name="Sitz J."/>
            <person name="Koo H."/>
            <person name="Salzberg S.L."/>
            <person name="Webster R.G."/>
            <person name="Hoffmann E."/>
            <person name="Krauss S."/>
            <person name="Naeve C."/>
            <person name="Bao Y."/>
            <person name="Bolotov P."/>
            <person name="Dernovoy D."/>
            <person name="Kiryutin B."/>
            <person name="Lipman D.J."/>
            <person name="Tatusova T."/>
        </authorList>
    </citation>
    <scope>NUCLEOTIDE SEQUENCE [GENOMIC RNA]</scope>
</reference>
<accession>Q08028</accession>
<accession>Q30NP7</accession>